<proteinExistence type="evidence at protein level"/>
<evidence type="ECO:0000250" key="1">
    <source>
        <dbReference type="UniProtKB" id="P61793"/>
    </source>
</evidence>
<evidence type="ECO:0000250" key="2">
    <source>
        <dbReference type="UniProtKB" id="Q92633"/>
    </source>
</evidence>
<evidence type="ECO:0000255" key="3"/>
<evidence type="ECO:0000255" key="4">
    <source>
        <dbReference type="PROSITE-ProRule" id="PRU00521"/>
    </source>
</evidence>
<evidence type="ECO:0000269" key="5">
    <source>
    </source>
</evidence>
<evidence type="ECO:0000303" key="6">
    <source>
    </source>
</evidence>
<feature type="chain" id="PRO_0000069419" description="Lysophosphatidic acid receptor 1">
    <location>
        <begin position="1"/>
        <end position="364"/>
    </location>
</feature>
<feature type="topological domain" description="Extracellular" evidence="2">
    <location>
        <begin position="1"/>
        <end position="50"/>
    </location>
</feature>
<feature type="transmembrane region" description="Helical; Name=1" evidence="2">
    <location>
        <begin position="51"/>
        <end position="75"/>
    </location>
</feature>
<feature type="topological domain" description="Cytoplasmic" evidence="2">
    <location>
        <begin position="76"/>
        <end position="83"/>
    </location>
</feature>
<feature type="transmembrane region" description="Helical; Name=2" evidence="2">
    <location>
        <begin position="84"/>
        <end position="107"/>
    </location>
</feature>
<feature type="topological domain" description="Extracellular" evidence="2">
    <location>
        <begin position="108"/>
        <end position="121"/>
    </location>
</feature>
<feature type="transmembrane region" description="Helical; Name=3" evidence="2">
    <location>
        <begin position="122"/>
        <end position="144"/>
    </location>
</feature>
<feature type="topological domain" description="Cytoplasmic" evidence="2">
    <location>
        <begin position="145"/>
        <end position="163"/>
    </location>
</feature>
<feature type="transmembrane region" description="Helical; Name=4" evidence="2">
    <location>
        <begin position="164"/>
        <end position="184"/>
    </location>
</feature>
<feature type="topological domain" description="Extracellular" evidence="2">
    <location>
        <begin position="185"/>
        <end position="204"/>
    </location>
</feature>
<feature type="transmembrane region" description="Helical; Name=5" evidence="2">
    <location>
        <begin position="205"/>
        <end position="225"/>
    </location>
</feature>
<feature type="topological domain" description="Cytoplasmic" evidence="2">
    <location>
        <begin position="226"/>
        <end position="255"/>
    </location>
</feature>
<feature type="transmembrane region" description="Helical; Name=6" evidence="2">
    <location>
        <begin position="256"/>
        <end position="280"/>
    </location>
</feature>
<feature type="topological domain" description="Extracellular" evidence="2">
    <location>
        <begin position="281"/>
        <end position="294"/>
    </location>
</feature>
<feature type="transmembrane region" description="Helical; Name=7" evidence="2">
    <location>
        <begin position="295"/>
        <end position="315"/>
    </location>
</feature>
<feature type="topological domain" description="Cytoplasmic" evidence="2">
    <location>
        <begin position="316"/>
        <end position="364"/>
    </location>
</feature>
<feature type="binding site" evidence="2">
    <location>
        <position position="39"/>
    </location>
    <ligand>
        <name>a 1-acyl-sn-glycero-3-phosphate</name>
        <dbReference type="ChEBI" id="CHEBI:57970"/>
    </ligand>
</feature>
<feature type="binding site" evidence="2">
    <location>
        <begin position="124"/>
        <end position="129"/>
    </location>
    <ligand>
        <name>a 1-acyl-sn-glycero-3-phosphate</name>
        <dbReference type="ChEBI" id="CHEBI:57970"/>
    </ligand>
</feature>
<feature type="binding site" evidence="2">
    <location>
        <position position="210"/>
    </location>
    <ligand>
        <name>a 1-acyl-sn-glycero-3-phosphate</name>
        <dbReference type="ChEBI" id="CHEBI:57970"/>
    </ligand>
</feature>
<feature type="modified residue" description="Phosphoserine" evidence="2">
    <location>
        <position position="341"/>
    </location>
</feature>
<feature type="modified residue" description="Phosphothreonine" evidence="1">
    <location>
        <position position="351"/>
    </location>
</feature>
<feature type="glycosylation site" description="N-linked (GlcNAc...) asparagine" evidence="3">
    <location>
        <position position="27"/>
    </location>
</feature>
<feature type="glycosylation site" description="N-linked (GlcNAc...) asparagine" evidence="3">
    <location>
        <position position="35"/>
    </location>
</feature>
<feature type="disulfide bond" evidence="2">
    <location>
        <begin position="24"/>
        <end position="190"/>
    </location>
</feature>
<feature type="disulfide bond" evidence="2">
    <location>
        <begin position="188"/>
        <end position="195"/>
    </location>
</feature>
<feature type="disulfide bond" evidence="2">
    <location>
        <begin position="284"/>
        <end position="287"/>
    </location>
</feature>
<name>LPAR1_RAT</name>
<dbReference type="EMBL" id="AF014418">
    <property type="protein sequence ID" value="AAB86381.1"/>
    <property type="molecule type" value="mRNA"/>
</dbReference>
<dbReference type="EMBL" id="AF090347">
    <property type="protein sequence ID" value="AAG24469.1"/>
    <property type="molecule type" value="mRNA"/>
</dbReference>
<dbReference type="EMBL" id="BC089227">
    <property type="protein sequence ID" value="AAH89227.1"/>
    <property type="molecule type" value="mRNA"/>
</dbReference>
<dbReference type="RefSeq" id="NP_446388.1">
    <property type="nucleotide sequence ID" value="NM_053936.4"/>
</dbReference>
<dbReference type="RefSeq" id="XP_006238257.1">
    <property type="nucleotide sequence ID" value="XM_006238195.5"/>
</dbReference>
<dbReference type="RefSeq" id="XP_006238259.1">
    <property type="nucleotide sequence ID" value="XM_006238197.5"/>
</dbReference>
<dbReference type="RefSeq" id="XP_006238262.1">
    <property type="nucleotide sequence ID" value="XM_006238200.5"/>
</dbReference>
<dbReference type="RefSeq" id="XP_006238263.1">
    <property type="nucleotide sequence ID" value="XM_006238201.5"/>
</dbReference>
<dbReference type="RefSeq" id="XP_017448614.1">
    <property type="nucleotide sequence ID" value="XM_017593125.3"/>
</dbReference>
<dbReference type="RefSeq" id="XP_017448615.1">
    <property type="nucleotide sequence ID" value="XM_017593126.1"/>
</dbReference>
<dbReference type="RefSeq" id="XP_017448616.1">
    <property type="nucleotide sequence ID" value="XM_017593127.3"/>
</dbReference>
<dbReference type="RefSeq" id="XP_017448617.1">
    <property type="nucleotide sequence ID" value="XM_017593128.1"/>
</dbReference>
<dbReference type="RefSeq" id="XP_063143145.1">
    <property type="nucleotide sequence ID" value="XM_063287075.1"/>
</dbReference>
<dbReference type="RefSeq" id="XP_063143146.1">
    <property type="nucleotide sequence ID" value="XM_063287076.1"/>
</dbReference>
<dbReference type="RefSeq" id="XP_063143147.1">
    <property type="nucleotide sequence ID" value="XM_063287077.1"/>
</dbReference>
<dbReference type="RefSeq" id="XP_063143148.1">
    <property type="nucleotide sequence ID" value="XM_063287078.1"/>
</dbReference>
<dbReference type="SMR" id="P61794"/>
<dbReference type="FunCoup" id="P61794">
    <property type="interactions" value="1604"/>
</dbReference>
<dbReference type="STRING" id="10116.ENSRNOP00000043652"/>
<dbReference type="BindingDB" id="P61794"/>
<dbReference type="ChEMBL" id="CHEMBL4595"/>
<dbReference type="GlyCosmos" id="P61794">
    <property type="glycosylation" value="2 sites, No reported glycans"/>
</dbReference>
<dbReference type="GlyGen" id="P61794">
    <property type="glycosylation" value="3 sites"/>
</dbReference>
<dbReference type="PhosphoSitePlus" id="P61794"/>
<dbReference type="SwissPalm" id="P61794"/>
<dbReference type="PaxDb" id="10116-ENSRNOP00000043652"/>
<dbReference type="Ensembl" id="ENSRNOT00000044348.3">
    <property type="protein sequence ID" value="ENSRNOP00000043652.2"/>
    <property type="gene ID" value="ENSRNOG00000013656.7"/>
</dbReference>
<dbReference type="GeneID" id="116744"/>
<dbReference type="KEGG" id="rno:116744"/>
<dbReference type="UCSC" id="RGD:620563">
    <property type="organism name" value="rat"/>
</dbReference>
<dbReference type="AGR" id="RGD:620563"/>
<dbReference type="CTD" id="1902"/>
<dbReference type="RGD" id="620563">
    <property type="gene designation" value="Lpar1"/>
</dbReference>
<dbReference type="eggNOG" id="KOG3656">
    <property type="taxonomic scope" value="Eukaryota"/>
</dbReference>
<dbReference type="GeneTree" id="ENSGT01120000271896"/>
<dbReference type="HOGENOM" id="CLU_047979_0_0_1"/>
<dbReference type="InParanoid" id="P61794"/>
<dbReference type="OMA" id="CQRQENI"/>
<dbReference type="OrthoDB" id="5987098at2759"/>
<dbReference type="PhylomeDB" id="P61794"/>
<dbReference type="TreeFam" id="TF330052"/>
<dbReference type="Reactome" id="R-RNO-416476">
    <property type="pathway name" value="G alpha (q) signalling events"/>
</dbReference>
<dbReference type="Reactome" id="R-RNO-418594">
    <property type="pathway name" value="G alpha (i) signalling events"/>
</dbReference>
<dbReference type="Reactome" id="R-RNO-419408">
    <property type="pathway name" value="Lysosphingolipid and LPA receptors"/>
</dbReference>
<dbReference type="PRO" id="PR:P61794"/>
<dbReference type="Proteomes" id="UP000002494">
    <property type="component" value="Chromosome 5"/>
</dbReference>
<dbReference type="Bgee" id="ENSRNOG00000013656">
    <property type="expression patterns" value="Expressed in Ammon's horn and 19 other cell types or tissues"/>
</dbReference>
<dbReference type="GO" id="GO:0009986">
    <property type="term" value="C:cell surface"/>
    <property type="evidence" value="ECO:0000250"/>
    <property type="project" value="UniProtKB"/>
</dbReference>
<dbReference type="GO" id="GO:0005737">
    <property type="term" value="C:cytoplasm"/>
    <property type="evidence" value="ECO:0000318"/>
    <property type="project" value="GO_Central"/>
</dbReference>
<dbReference type="GO" id="GO:0043198">
    <property type="term" value="C:dendritic shaft"/>
    <property type="evidence" value="ECO:0000314"/>
    <property type="project" value="RGD"/>
</dbReference>
<dbReference type="GO" id="GO:0043197">
    <property type="term" value="C:dendritic spine"/>
    <property type="evidence" value="ECO:0000314"/>
    <property type="project" value="RGD"/>
</dbReference>
<dbReference type="GO" id="GO:0030139">
    <property type="term" value="C:endocytic vesicle"/>
    <property type="evidence" value="ECO:0000266"/>
    <property type="project" value="RGD"/>
</dbReference>
<dbReference type="GO" id="GO:0005768">
    <property type="term" value="C:endosome"/>
    <property type="evidence" value="ECO:0000266"/>
    <property type="project" value="RGD"/>
</dbReference>
<dbReference type="GO" id="GO:0098982">
    <property type="term" value="C:GABA-ergic synapse"/>
    <property type="evidence" value="ECO:0000314"/>
    <property type="project" value="SynGO"/>
</dbReference>
<dbReference type="GO" id="GO:0098978">
    <property type="term" value="C:glutamatergic synapse"/>
    <property type="evidence" value="ECO:0000314"/>
    <property type="project" value="SynGO"/>
</dbReference>
<dbReference type="GO" id="GO:0043025">
    <property type="term" value="C:neuronal cell body"/>
    <property type="evidence" value="ECO:0000314"/>
    <property type="project" value="RGD"/>
</dbReference>
<dbReference type="GO" id="GO:0005886">
    <property type="term" value="C:plasma membrane"/>
    <property type="evidence" value="ECO:0000250"/>
    <property type="project" value="UniProtKB"/>
</dbReference>
<dbReference type="GO" id="GO:0045211">
    <property type="term" value="C:postsynaptic membrane"/>
    <property type="evidence" value="ECO:0000314"/>
    <property type="project" value="SynGO"/>
</dbReference>
<dbReference type="GO" id="GO:0042734">
    <property type="term" value="C:presynaptic membrane"/>
    <property type="evidence" value="ECO:0000314"/>
    <property type="project" value="SynGO"/>
</dbReference>
<dbReference type="GO" id="GO:0004930">
    <property type="term" value="F:G protein-coupled receptor activity"/>
    <property type="evidence" value="ECO:0000304"/>
    <property type="project" value="RGD"/>
</dbReference>
<dbReference type="GO" id="GO:0001965">
    <property type="term" value="F:G-protein alpha-subunit binding"/>
    <property type="evidence" value="ECO:0000315"/>
    <property type="project" value="RGD"/>
</dbReference>
<dbReference type="GO" id="GO:0035727">
    <property type="term" value="F:lysophosphatidic acid binding"/>
    <property type="evidence" value="ECO:0000266"/>
    <property type="project" value="RGD"/>
</dbReference>
<dbReference type="GO" id="GO:0070915">
    <property type="term" value="F:lysophosphatidic acid receptor activity"/>
    <property type="evidence" value="ECO:0000250"/>
    <property type="project" value="UniProtKB"/>
</dbReference>
<dbReference type="GO" id="GO:0030165">
    <property type="term" value="F:PDZ domain binding"/>
    <property type="evidence" value="ECO:0000266"/>
    <property type="project" value="RGD"/>
</dbReference>
<dbReference type="GO" id="GO:0005543">
    <property type="term" value="F:phospholipid binding"/>
    <property type="evidence" value="ECO:0000315"/>
    <property type="project" value="RGD"/>
</dbReference>
<dbReference type="GO" id="GO:0007189">
    <property type="term" value="P:adenylate cyclase-activating G protein-coupled receptor signaling pathway"/>
    <property type="evidence" value="ECO:0000318"/>
    <property type="project" value="GO_Central"/>
</dbReference>
<dbReference type="GO" id="GO:0007193">
    <property type="term" value="P:adenylate cyclase-inhibiting G protein-coupled receptor signaling pathway"/>
    <property type="evidence" value="ECO:0000250"/>
    <property type="project" value="UniProtKB"/>
</dbReference>
<dbReference type="GO" id="GO:0032060">
    <property type="term" value="P:bleb assembly"/>
    <property type="evidence" value="ECO:0000266"/>
    <property type="project" value="RGD"/>
</dbReference>
<dbReference type="GO" id="GO:0060326">
    <property type="term" value="P:cell chemotaxis"/>
    <property type="evidence" value="ECO:0000266"/>
    <property type="project" value="RGD"/>
</dbReference>
<dbReference type="GO" id="GO:1904566">
    <property type="term" value="P:cellular response to 1-oleoyl-sn-glycerol 3-phosphate"/>
    <property type="evidence" value="ECO:0000315"/>
    <property type="project" value="RGD"/>
</dbReference>
<dbReference type="GO" id="GO:0071453">
    <property type="term" value="P:cellular response to oxygen levels"/>
    <property type="evidence" value="ECO:0000270"/>
    <property type="project" value="RGD"/>
</dbReference>
<dbReference type="GO" id="GO:0021549">
    <property type="term" value="P:cerebellum development"/>
    <property type="evidence" value="ECO:0000270"/>
    <property type="project" value="RGD"/>
</dbReference>
<dbReference type="GO" id="GO:0022038">
    <property type="term" value="P:corpus callosum development"/>
    <property type="evidence" value="ECO:0000270"/>
    <property type="project" value="RGD"/>
</dbReference>
<dbReference type="GO" id="GO:0007186">
    <property type="term" value="P:G protein-coupled receptor signaling pathway"/>
    <property type="evidence" value="ECO:0000315"/>
    <property type="project" value="RGD"/>
</dbReference>
<dbReference type="GO" id="GO:0042552">
    <property type="term" value="P:myelination"/>
    <property type="evidence" value="ECO:0000270"/>
    <property type="project" value="RGD"/>
</dbReference>
<dbReference type="GO" id="GO:0141162">
    <property type="term" value="P:negative regulation of cAMP/PKA signal transduction"/>
    <property type="evidence" value="ECO:0000315"/>
    <property type="project" value="RGD"/>
</dbReference>
<dbReference type="GO" id="GO:1902018">
    <property type="term" value="P:negative regulation of cilium assembly"/>
    <property type="evidence" value="ECO:0000250"/>
    <property type="project" value="UniProtKB"/>
</dbReference>
<dbReference type="GO" id="GO:0010977">
    <property type="term" value="P:negative regulation of neuron projection development"/>
    <property type="evidence" value="ECO:0000315"/>
    <property type="project" value="RGD"/>
</dbReference>
<dbReference type="GO" id="GO:0022008">
    <property type="term" value="P:neurogenesis"/>
    <property type="evidence" value="ECO:0000270"/>
    <property type="project" value="RGD"/>
</dbReference>
<dbReference type="GO" id="GO:0014003">
    <property type="term" value="P:oligodendrocyte development"/>
    <property type="evidence" value="ECO:0000270"/>
    <property type="project" value="RGD"/>
</dbReference>
<dbReference type="GO" id="GO:0021554">
    <property type="term" value="P:optic nerve development"/>
    <property type="evidence" value="ECO:0000270"/>
    <property type="project" value="RGD"/>
</dbReference>
<dbReference type="GO" id="GO:0007200">
    <property type="term" value="P:phospholipase C-activating G protein-coupled receptor signaling pathway"/>
    <property type="evidence" value="ECO:0000266"/>
    <property type="project" value="RGD"/>
</dbReference>
<dbReference type="GO" id="GO:0043065">
    <property type="term" value="P:positive regulation of apoptotic process"/>
    <property type="evidence" value="ECO:0000315"/>
    <property type="project" value="RGD"/>
</dbReference>
<dbReference type="GO" id="GO:0043123">
    <property type="term" value="P:positive regulation of canonical NF-kappaB signal transduction"/>
    <property type="evidence" value="ECO:0000266"/>
    <property type="project" value="RGD"/>
</dbReference>
<dbReference type="GO" id="GO:0060999">
    <property type="term" value="P:positive regulation of dendritic spine development"/>
    <property type="evidence" value="ECO:0000314"/>
    <property type="project" value="RGD"/>
</dbReference>
<dbReference type="GO" id="GO:0043410">
    <property type="term" value="P:positive regulation of MAPK cascade"/>
    <property type="evidence" value="ECO:0000250"/>
    <property type="project" value="UniProtKB"/>
</dbReference>
<dbReference type="GO" id="GO:0035025">
    <property type="term" value="P:positive regulation of Rho protein signal transduction"/>
    <property type="evidence" value="ECO:0000250"/>
    <property type="project" value="UniProtKB"/>
</dbReference>
<dbReference type="GO" id="GO:0071673">
    <property type="term" value="P:positive regulation of smooth muscle cell chemotaxis"/>
    <property type="evidence" value="ECO:0000315"/>
    <property type="project" value="RGD"/>
</dbReference>
<dbReference type="GO" id="GO:0051496">
    <property type="term" value="P:positive regulation of stress fiber assembly"/>
    <property type="evidence" value="ECO:0000250"/>
    <property type="project" value="UniProtKB"/>
</dbReference>
<dbReference type="GO" id="GO:0008360">
    <property type="term" value="P:regulation of cell shape"/>
    <property type="evidence" value="ECO:0000250"/>
    <property type="project" value="UniProtKB"/>
</dbReference>
<dbReference type="GO" id="GO:0019222">
    <property type="term" value="P:regulation of metabolic process"/>
    <property type="evidence" value="ECO:0000318"/>
    <property type="project" value="GO_Central"/>
</dbReference>
<dbReference type="GO" id="GO:0099149">
    <property type="term" value="P:regulation of postsynaptic neurotransmitter receptor internalization"/>
    <property type="evidence" value="ECO:0000314"/>
    <property type="project" value="SynGO"/>
</dbReference>
<dbReference type="GO" id="GO:0098693">
    <property type="term" value="P:regulation of synaptic vesicle cycle"/>
    <property type="evidence" value="ECO:0000314"/>
    <property type="project" value="SynGO"/>
</dbReference>
<dbReference type="CDD" id="cd15344">
    <property type="entry name" value="7tmA_LPAR1_Edg2"/>
    <property type="match status" value="1"/>
</dbReference>
<dbReference type="FunFam" id="1.20.1070.10:FF:000025">
    <property type="entry name" value="Lysophosphatidic acid receptor 1"/>
    <property type="match status" value="1"/>
</dbReference>
<dbReference type="Gene3D" id="1.20.1070.10">
    <property type="entry name" value="Rhodopsin 7-helix transmembrane proteins"/>
    <property type="match status" value="1"/>
</dbReference>
<dbReference type="InterPro" id="IPR000276">
    <property type="entry name" value="GPCR_Rhodpsn"/>
</dbReference>
<dbReference type="InterPro" id="IPR017452">
    <property type="entry name" value="GPCR_Rhodpsn_7TM"/>
</dbReference>
<dbReference type="InterPro" id="IPR004065">
    <property type="entry name" value="LPA_rcpt"/>
</dbReference>
<dbReference type="InterPro" id="IPR002277">
    <property type="entry name" value="LPA_rcpt_EDG2"/>
</dbReference>
<dbReference type="PANTHER" id="PTHR22750">
    <property type="entry name" value="G-PROTEIN COUPLED RECEPTOR"/>
    <property type="match status" value="1"/>
</dbReference>
<dbReference type="Pfam" id="PF00001">
    <property type="entry name" value="7tm_1"/>
    <property type="match status" value="1"/>
</dbReference>
<dbReference type="PRINTS" id="PR01148">
    <property type="entry name" value="EDG2RECEPTOR"/>
</dbReference>
<dbReference type="PRINTS" id="PR00237">
    <property type="entry name" value="GPCRRHODOPSN"/>
</dbReference>
<dbReference type="PRINTS" id="PR01527">
    <property type="entry name" value="LPARECEPTOR"/>
</dbReference>
<dbReference type="SMART" id="SM01381">
    <property type="entry name" value="7TM_GPCR_Srsx"/>
    <property type="match status" value="1"/>
</dbReference>
<dbReference type="SUPFAM" id="SSF81321">
    <property type="entry name" value="Family A G protein-coupled receptor-like"/>
    <property type="match status" value="1"/>
</dbReference>
<dbReference type="PROSITE" id="PS00237">
    <property type="entry name" value="G_PROTEIN_RECEP_F1_1"/>
    <property type="match status" value="1"/>
</dbReference>
<dbReference type="PROSITE" id="PS50262">
    <property type="entry name" value="G_PROTEIN_RECEP_F1_2"/>
    <property type="match status" value="1"/>
</dbReference>
<reference key="1">
    <citation type="journal article" date="1998" name="Eur. J. Neurosci.">
        <title>A rat G protein-coupled receptor selectively expressed in myelin-forming cells.</title>
        <authorList>
            <person name="Allard J."/>
            <person name="Barron S."/>
            <person name="Diaz J."/>
            <person name="Lubetzki C."/>
            <person name="Zalc B."/>
            <person name="Schwartz J.-C."/>
            <person name="Sokoloff P."/>
        </authorList>
    </citation>
    <scope>NUCLEOTIDE SEQUENCE [MRNA]</scope>
    <scope>TISSUE SPECIFICITY</scope>
    <source>
        <strain>Sprague-Dawley</strain>
        <tissue>Olfactory bulb</tissue>
    </source>
</reference>
<reference key="2">
    <citation type="submission" date="1998-09" db="EMBL/GenBank/DDBJ databases">
        <title>Identification and characterization of novel G-protein coupled receptors expressed in regenerating peripheral nerve.</title>
        <authorList>
            <person name="Carroll S.L."/>
            <person name="Miller M.L."/>
            <person name="Benedict-Hamilton H.M."/>
        </authorList>
    </citation>
    <scope>NUCLEOTIDE SEQUENCE [MRNA]</scope>
    <source>
        <strain>Sprague-Dawley</strain>
    </source>
</reference>
<reference key="3">
    <citation type="journal article" date="2004" name="Genome Res.">
        <title>The status, quality, and expansion of the NIH full-length cDNA project: the Mammalian Gene Collection (MGC).</title>
        <authorList>
            <consortium name="The MGC Project Team"/>
        </authorList>
    </citation>
    <scope>NUCLEOTIDE SEQUENCE [LARGE SCALE MRNA]</scope>
    <source>
        <tissue>Brain</tissue>
    </source>
</reference>
<reference key="4">
    <citation type="journal article" date="2012" name="Nat. Commun.">
        <title>Quantitative maps of protein phosphorylation sites across 14 different rat organs and tissues.</title>
        <authorList>
            <person name="Lundby A."/>
            <person name="Secher A."/>
            <person name="Lage K."/>
            <person name="Nordsborg N.B."/>
            <person name="Dmytriyev A."/>
            <person name="Lundby C."/>
            <person name="Olsen J.V."/>
        </authorList>
    </citation>
    <scope>IDENTIFICATION BY MASS SPECTROMETRY [LARGE SCALE ANALYSIS]</scope>
</reference>
<comment type="function">
    <text evidence="1 2">Receptor for lysophosphatidic acid (LPA). Plays a role in the reorganization of the actin cytoskeleton, cell migration, differentiation and proliferation, and thereby contributes to the responses to tissue damage and infectious agents. Activates downstream signaling cascades via the G(i)/G(o), G(12)/G(13), and G(q) families of heteromeric G proteins. Signaling inhibits adenylyl cyclase activity and decreases cellular cAMP levels. Signaling triggers an increase of cytoplasmic Ca(2+) levels. Activates RALA; this leads to the activation of phospholipase C (PLC) and the formation of inositol 1,4,5-trisphosphate. Signaling mediates activation of down-stream MAP kinases. Contributes to the regulation of cell shape. Promotes Rho-dependent reorganization of the actin cytoskeleton in neuronal cells and neurite retraction. Promotes the activation of Rho and the formation of actin stress fibers. Promotes formation of lamellipodia at the leading edge of migrating cells via activation of RAC1. Through its function as LPA receptor, plays a role in chemotaxis and cell migration, including responses to injury and wounding. Plays a role in triggering inflammation in response to bacterial lipopolysaccharide (LPS) via its interaction with CD14. Promotes cell proliferation in response to LPA. Inhibits the intracellular ciliogenesis pathway in response to LPA and through AKT1 activation (By similarity). Required for normal skeleton development. May play a role in osteoblast differentiation. Required for normal brain development. Required for normal proliferation, survival and maturation of newly formed neurons in the adult dentate gyrus. Plays a role in pain perception and in the initiation of neuropathic pain.</text>
</comment>
<comment type="subunit">
    <text evidence="1 2">Interacts with RALA and GRK2 (By similarity). Interacts with GNAQ and GNA13. Interacts with CD14; the interaction is enhanced by exposure to bacterial lipopolysaccharide (LPS) (By similarity).</text>
</comment>
<comment type="subcellular location">
    <subcellularLocation>
        <location evidence="1">Cell surface</location>
    </subcellularLocation>
    <subcellularLocation>
        <location evidence="1">Cell membrane</location>
        <topology evidence="2">Multi-pass membrane protein</topology>
    </subcellularLocation>
    <subcellularLocation>
        <location evidence="1 2">Endosome</location>
    </subcellularLocation>
    <text evidence="1 2">Prior to LPA treatment found predominantly at the cell surface. Internalized after LPA treatment. Colocalizes with RALA in endocytic vesicles after LPA treatment.</text>
</comment>
<comment type="tissue specificity">
    <text evidence="5">Detected in brain corpus callosum, medulla oblongata, cerebellum and sciatic nerve. Detected in heart.</text>
</comment>
<comment type="PTM">
    <text evidence="2">N-glycosylated.</text>
</comment>
<comment type="similarity">
    <text evidence="4">Belongs to the G-protein coupled receptor 1 family.</text>
</comment>
<gene>
    <name type="primary">Lpar1</name>
    <name evidence="6" type="synonym">Edg2</name>
    <name type="synonym">Gpcr91</name>
    <name type="synonym">Lpa1</name>
</gene>
<keyword id="KW-1003">Cell membrane</keyword>
<keyword id="KW-1015">Disulfide bond</keyword>
<keyword id="KW-0967">Endosome</keyword>
<keyword id="KW-0297">G-protein coupled receptor</keyword>
<keyword id="KW-0325">Glycoprotein</keyword>
<keyword id="KW-0472">Membrane</keyword>
<keyword id="KW-0597">Phosphoprotein</keyword>
<keyword id="KW-0675">Receptor</keyword>
<keyword id="KW-1185">Reference proteome</keyword>
<keyword id="KW-0807">Transducer</keyword>
<keyword id="KW-0812">Transmembrane</keyword>
<keyword id="KW-1133">Transmembrane helix</keyword>
<protein>
    <recommendedName>
        <fullName>Lysophosphatidic acid receptor 1</fullName>
        <shortName>LPA receptor 1</shortName>
        <shortName>LPA-1</shortName>
    </recommendedName>
    <alternativeName>
        <fullName>Lysophosphatidic acid receptor Edg-2</fullName>
    </alternativeName>
</protein>
<organism>
    <name type="scientific">Rattus norvegicus</name>
    <name type="common">Rat</name>
    <dbReference type="NCBI Taxonomy" id="10116"/>
    <lineage>
        <taxon>Eukaryota</taxon>
        <taxon>Metazoa</taxon>
        <taxon>Chordata</taxon>
        <taxon>Craniata</taxon>
        <taxon>Vertebrata</taxon>
        <taxon>Euteleostomi</taxon>
        <taxon>Mammalia</taxon>
        <taxon>Eutheria</taxon>
        <taxon>Euarchontoglires</taxon>
        <taxon>Glires</taxon>
        <taxon>Rodentia</taxon>
        <taxon>Myomorpha</taxon>
        <taxon>Muroidea</taxon>
        <taxon>Muridae</taxon>
        <taxon>Murinae</taxon>
        <taxon>Rattus</taxon>
    </lineage>
</organism>
<sequence length="364" mass="41119">MAAASTSSPVISQPQFTAMNEQQCFYNESIAFFYNRSGKYLATEWNTVSKLVMGLGITVCVFIMLANLLVMVAIYVNRRFHFPIYYLMANLAAADFFAGLAYFYLMFNTGPNTRRLTVSTWLLRQGLIDTSLTASVANLLAIAIERHITVFRMQLHTRMSNRRVVVVIVVIWTMAIVMGAIPSVGWNCICDIDHCSNMAPLYSDSYLVFWAIFNLVTFVVMVVLYAHIFGYVRQRTMRMSRHSSGPRRNRDTMMSLLKTVVIVLGAFIVCWTPGLVLLLLDVCCPQCDVLAYEKFFLLLAEFNSAMNPIIYSYRDKEMSATFRQILCCQRNENPNGPTEGSDRSASSLNHTILAGVHSNDHSVV</sequence>
<accession>P61794</accession>
<accession>O88584</accession>
<accession>P56487</accession>
<accession>P70420</accession>
<accession>Q5FWS2</accession>
<accession>Q61130</accession>